<evidence type="ECO:0000250" key="1">
    <source>
        <dbReference type="UniProtKB" id="O48814"/>
    </source>
</evidence>
<evidence type="ECO:0000255" key="2"/>
<evidence type="ECO:0000255" key="3">
    <source>
        <dbReference type="PROSITE-ProRule" id="PRU00159"/>
    </source>
</evidence>
<evidence type="ECO:0000255" key="4">
    <source>
        <dbReference type="PROSITE-ProRule" id="PRU10027"/>
    </source>
</evidence>
<evidence type="ECO:0000256" key="5">
    <source>
        <dbReference type="SAM" id="MobiDB-lite"/>
    </source>
</evidence>
<evidence type="ECO:0000305" key="6"/>
<keyword id="KW-0025">Alternative splicing</keyword>
<keyword id="KW-0067">ATP-binding</keyword>
<keyword id="KW-0325">Glycoprotein</keyword>
<keyword id="KW-0418">Kinase</keyword>
<keyword id="KW-0433">Leucine-rich repeat</keyword>
<keyword id="KW-0472">Membrane</keyword>
<keyword id="KW-0547">Nucleotide-binding</keyword>
<keyword id="KW-0597">Phosphoprotein</keyword>
<keyword id="KW-0675">Receptor</keyword>
<keyword id="KW-1185">Reference proteome</keyword>
<keyword id="KW-0677">Repeat</keyword>
<keyword id="KW-0723">Serine/threonine-protein kinase</keyword>
<keyword id="KW-0732">Signal</keyword>
<keyword id="KW-0808">Transferase</keyword>
<keyword id="KW-0812">Transmembrane</keyword>
<keyword id="KW-1133">Transmembrane helix</keyword>
<proteinExistence type="evidence at protein level"/>
<accession>C0LGG8</accession>
<accession>F4HRH3</accession>
<accession>Q8H7G0</accession>
<accession>Q9LPF9</accession>
<reference key="1">
    <citation type="journal article" date="2000" name="Nature">
        <title>Sequence and analysis of chromosome 1 of the plant Arabidopsis thaliana.</title>
        <authorList>
            <person name="Theologis A."/>
            <person name="Ecker J.R."/>
            <person name="Palm C.J."/>
            <person name="Federspiel N.A."/>
            <person name="Kaul S."/>
            <person name="White O."/>
            <person name="Alonso J."/>
            <person name="Altafi H."/>
            <person name="Araujo R."/>
            <person name="Bowman C.L."/>
            <person name="Brooks S.Y."/>
            <person name="Buehler E."/>
            <person name="Chan A."/>
            <person name="Chao Q."/>
            <person name="Chen H."/>
            <person name="Cheuk R.F."/>
            <person name="Chin C.W."/>
            <person name="Chung M.K."/>
            <person name="Conn L."/>
            <person name="Conway A.B."/>
            <person name="Conway A.R."/>
            <person name="Creasy T.H."/>
            <person name="Dewar K."/>
            <person name="Dunn P."/>
            <person name="Etgu P."/>
            <person name="Feldblyum T.V."/>
            <person name="Feng J.-D."/>
            <person name="Fong B."/>
            <person name="Fujii C.Y."/>
            <person name="Gill J.E."/>
            <person name="Goldsmith A.D."/>
            <person name="Haas B."/>
            <person name="Hansen N.F."/>
            <person name="Hughes B."/>
            <person name="Huizar L."/>
            <person name="Hunter J.L."/>
            <person name="Jenkins J."/>
            <person name="Johnson-Hopson C."/>
            <person name="Khan S."/>
            <person name="Khaykin E."/>
            <person name="Kim C.J."/>
            <person name="Koo H.L."/>
            <person name="Kremenetskaia I."/>
            <person name="Kurtz D.B."/>
            <person name="Kwan A."/>
            <person name="Lam B."/>
            <person name="Langin-Hooper S."/>
            <person name="Lee A."/>
            <person name="Lee J.M."/>
            <person name="Lenz C.A."/>
            <person name="Li J.H."/>
            <person name="Li Y.-P."/>
            <person name="Lin X."/>
            <person name="Liu S.X."/>
            <person name="Liu Z.A."/>
            <person name="Luros J.S."/>
            <person name="Maiti R."/>
            <person name="Marziali A."/>
            <person name="Militscher J."/>
            <person name="Miranda M."/>
            <person name="Nguyen M."/>
            <person name="Nierman W.C."/>
            <person name="Osborne B.I."/>
            <person name="Pai G."/>
            <person name="Peterson J."/>
            <person name="Pham P.K."/>
            <person name="Rizzo M."/>
            <person name="Rooney T."/>
            <person name="Rowley D."/>
            <person name="Sakano H."/>
            <person name="Salzberg S.L."/>
            <person name="Schwartz J.R."/>
            <person name="Shinn P."/>
            <person name="Southwick A.M."/>
            <person name="Sun H."/>
            <person name="Tallon L.J."/>
            <person name="Tambunga G."/>
            <person name="Toriumi M.J."/>
            <person name="Town C.D."/>
            <person name="Utterback T."/>
            <person name="Van Aken S."/>
            <person name="Vaysberg M."/>
            <person name="Vysotskaia V.S."/>
            <person name="Walker M."/>
            <person name="Wu D."/>
            <person name="Yu G."/>
            <person name="Fraser C.M."/>
            <person name="Venter J.C."/>
            <person name="Davis R.W."/>
        </authorList>
    </citation>
    <scope>NUCLEOTIDE SEQUENCE [LARGE SCALE GENOMIC DNA]</scope>
    <source>
        <strain>cv. Columbia</strain>
    </source>
</reference>
<reference key="2">
    <citation type="journal article" date="2017" name="Plant J.">
        <title>Araport11: a complete reannotation of the Arabidopsis thaliana reference genome.</title>
        <authorList>
            <person name="Cheng C.Y."/>
            <person name="Krishnakumar V."/>
            <person name="Chan A.P."/>
            <person name="Thibaud-Nissen F."/>
            <person name="Schobel S."/>
            <person name="Town C.D."/>
        </authorList>
    </citation>
    <scope>GENOME REANNOTATION</scope>
    <source>
        <strain>cv. Columbia</strain>
    </source>
</reference>
<reference key="3">
    <citation type="journal article" date="2010" name="BMC Genomics">
        <title>Genome-wide cloning and sequence analysis of leucine-rich repeat receptor-like protein kinase genes in Arabidopsis thaliana.</title>
        <authorList>
            <person name="Gou X."/>
            <person name="He K."/>
            <person name="Yang H."/>
            <person name="Yuan T."/>
            <person name="Lin H."/>
            <person name="Clouse S.D."/>
            <person name="Li J."/>
        </authorList>
    </citation>
    <scope>NUCLEOTIDE SEQUENCE [LARGE SCALE MRNA] (ISOFORM 1)</scope>
    <source>
        <strain>cv. Columbia</strain>
    </source>
</reference>
<reference key="4">
    <citation type="submission" date="1998-08" db="EMBL/GenBank/DDBJ databases">
        <title>Signal peptide selection derived cDNAs from Arabidopsis thaliana leaves and guard cells.</title>
        <authorList>
            <person name="Stracke R."/>
            <person name="Palme K."/>
        </authorList>
    </citation>
    <scope>NUCLEOTIDE SEQUENCE [LARGE SCALE MRNA] OF 1-182 (ISOFORM 1)</scope>
</reference>
<reference key="5">
    <citation type="journal article" date="2009" name="Plant Physiol.">
        <title>Large-scale Arabidopsis phosphoproteome profiling reveals novel chloroplast kinase substrates and phosphorylation networks.</title>
        <authorList>
            <person name="Reiland S."/>
            <person name="Messerli G."/>
            <person name="Baerenfaller K."/>
            <person name="Gerrits B."/>
            <person name="Endler A."/>
            <person name="Grossmann J."/>
            <person name="Gruissem W."/>
            <person name="Baginsky S."/>
        </authorList>
    </citation>
    <scope>IDENTIFICATION BY MASS SPECTROMETRY [LARGE SCALE ANALYSIS]</scope>
</reference>
<gene>
    <name type="ordered locus">At1g53430</name>
    <name type="ORF">T3F20.25</name>
</gene>
<organism>
    <name type="scientific">Arabidopsis thaliana</name>
    <name type="common">Mouse-ear cress</name>
    <dbReference type="NCBI Taxonomy" id="3702"/>
    <lineage>
        <taxon>Eukaryota</taxon>
        <taxon>Viridiplantae</taxon>
        <taxon>Streptophyta</taxon>
        <taxon>Embryophyta</taxon>
        <taxon>Tracheophyta</taxon>
        <taxon>Spermatophyta</taxon>
        <taxon>Magnoliopsida</taxon>
        <taxon>eudicotyledons</taxon>
        <taxon>Gunneridae</taxon>
        <taxon>Pentapetalae</taxon>
        <taxon>rosids</taxon>
        <taxon>malvids</taxon>
        <taxon>Brassicales</taxon>
        <taxon>Brassicaceae</taxon>
        <taxon>Camelineae</taxon>
        <taxon>Arabidopsis</taxon>
    </lineage>
</organism>
<comment type="catalytic activity">
    <reaction>
        <text>L-seryl-[protein] + ATP = O-phospho-L-seryl-[protein] + ADP + H(+)</text>
        <dbReference type="Rhea" id="RHEA:17989"/>
        <dbReference type="Rhea" id="RHEA-COMP:9863"/>
        <dbReference type="Rhea" id="RHEA-COMP:11604"/>
        <dbReference type="ChEBI" id="CHEBI:15378"/>
        <dbReference type="ChEBI" id="CHEBI:29999"/>
        <dbReference type="ChEBI" id="CHEBI:30616"/>
        <dbReference type="ChEBI" id="CHEBI:83421"/>
        <dbReference type="ChEBI" id="CHEBI:456216"/>
        <dbReference type="EC" id="2.7.11.1"/>
    </reaction>
</comment>
<comment type="catalytic activity">
    <reaction>
        <text>L-threonyl-[protein] + ATP = O-phospho-L-threonyl-[protein] + ADP + H(+)</text>
        <dbReference type="Rhea" id="RHEA:46608"/>
        <dbReference type="Rhea" id="RHEA-COMP:11060"/>
        <dbReference type="Rhea" id="RHEA-COMP:11605"/>
        <dbReference type="ChEBI" id="CHEBI:15378"/>
        <dbReference type="ChEBI" id="CHEBI:30013"/>
        <dbReference type="ChEBI" id="CHEBI:30616"/>
        <dbReference type="ChEBI" id="CHEBI:61977"/>
        <dbReference type="ChEBI" id="CHEBI:456216"/>
        <dbReference type="EC" id="2.7.11.1"/>
    </reaction>
</comment>
<comment type="interaction">
    <interactant intactId="EBI-20656135">
        <id>C0LGG8</id>
    </interactant>
    <interactant intactId="EBI-20654045">
        <id>A0A1I9LQ53</id>
        <label>At3g50230</label>
    </interactant>
    <organismsDiffer>false</organismsDiffer>
    <experiments>2</experiments>
</comment>
<comment type="interaction">
    <interactant intactId="EBI-20656135">
        <id>C0LGG8</id>
    </interactant>
    <interactant intactId="EBI-1626936">
        <id>Q9LVI6</id>
        <label>RLK902</label>
    </interactant>
    <organismsDiffer>false</organismsDiffer>
    <experiments>2</experiments>
</comment>
<comment type="subcellular location">
    <subcellularLocation>
        <location evidence="2">Membrane</location>
        <topology evidence="2">Single-pass type I membrane protein</topology>
    </subcellularLocation>
</comment>
<comment type="alternative products">
    <event type="alternative splicing"/>
    <isoform>
        <id>C0LGG8-1</id>
        <name>1</name>
        <sequence type="displayed"/>
    </isoform>
    <isoform>
        <id>C0LGG8-2</id>
        <name>2</name>
        <sequence type="described" ref="VSP_038281 VSP_038282"/>
    </isoform>
</comment>
<comment type="similarity">
    <text evidence="3">Belongs to the protein kinase superfamily. Ser/Thr protein kinase family.</text>
</comment>
<comment type="sequence caution" evidence="6">
    <conflict type="erroneous gene model prediction">
        <sequence resource="EMBL-CDS" id="AAF78446"/>
    </conflict>
</comment>
<protein>
    <recommendedName>
        <fullName>Probable LRR receptor-like serine/threonine-protein kinase At1g53430</fullName>
        <ecNumber>2.7.11.1</ecNumber>
    </recommendedName>
</protein>
<dbReference type="EC" id="2.7.11.1"/>
<dbReference type="EMBL" id="AC018748">
    <property type="protein sequence ID" value="AAF78446.1"/>
    <property type="status" value="ALT_SEQ"/>
    <property type="molecule type" value="Genomic_DNA"/>
</dbReference>
<dbReference type="EMBL" id="CP002684">
    <property type="protein sequence ID" value="AEE32939.2"/>
    <property type="molecule type" value="Genomic_DNA"/>
</dbReference>
<dbReference type="EMBL" id="FJ708657">
    <property type="protein sequence ID" value="ACN59253.1"/>
    <property type="molecule type" value="mRNA"/>
</dbReference>
<dbReference type="EMBL" id="AF083693">
    <property type="protein sequence ID" value="AAN60252.1"/>
    <property type="molecule type" value="mRNA"/>
</dbReference>
<dbReference type="PIR" id="C96574">
    <property type="entry name" value="C96574"/>
</dbReference>
<dbReference type="RefSeq" id="NP_001319214.1">
    <molecule id="C0LGG8-1"/>
    <property type="nucleotide sequence ID" value="NM_001333594.1"/>
</dbReference>
<dbReference type="SMR" id="C0LGG8"/>
<dbReference type="BioGRID" id="27003">
    <property type="interactions" value="18"/>
</dbReference>
<dbReference type="FunCoup" id="C0LGG8">
    <property type="interactions" value="863"/>
</dbReference>
<dbReference type="IntAct" id="C0LGG8">
    <property type="interactions" value="18"/>
</dbReference>
<dbReference type="STRING" id="3702.C0LGG8"/>
<dbReference type="GlyGen" id="C0LGG8">
    <property type="glycosylation" value="14 sites"/>
</dbReference>
<dbReference type="iPTMnet" id="C0LGG8"/>
<dbReference type="PaxDb" id="3702-AT1G53430.1"/>
<dbReference type="ProteomicsDB" id="243015">
    <molecule id="C0LGG8-1"/>
</dbReference>
<dbReference type="EnsemblPlants" id="AT1G53430.1">
    <molecule id="C0LGG8-1"/>
    <property type="protein sequence ID" value="AT1G53430.1"/>
    <property type="gene ID" value="AT1G53430"/>
</dbReference>
<dbReference type="GeneID" id="841778"/>
<dbReference type="Gramene" id="AT1G53430.1">
    <molecule id="C0LGG8-1"/>
    <property type="protein sequence ID" value="AT1G53430.1"/>
    <property type="gene ID" value="AT1G53430"/>
</dbReference>
<dbReference type="KEGG" id="ath:AT1G53430"/>
<dbReference type="Araport" id="AT1G53430"/>
<dbReference type="TAIR" id="AT1G53430">
    <property type="gene designation" value="NILR2"/>
</dbReference>
<dbReference type="eggNOG" id="ENOG502QTCP">
    <property type="taxonomic scope" value="Eukaryota"/>
</dbReference>
<dbReference type="InParanoid" id="C0LGG8"/>
<dbReference type="OMA" id="RRMKICV"/>
<dbReference type="PhylomeDB" id="C0LGG8"/>
<dbReference type="PRO" id="PR:C0LGG8"/>
<dbReference type="Proteomes" id="UP000006548">
    <property type="component" value="Chromosome 1"/>
</dbReference>
<dbReference type="ExpressionAtlas" id="C0LGG8">
    <property type="expression patterns" value="baseline and differential"/>
</dbReference>
<dbReference type="GO" id="GO:0016020">
    <property type="term" value="C:membrane"/>
    <property type="evidence" value="ECO:0007669"/>
    <property type="project" value="UniProtKB-SubCell"/>
</dbReference>
<dbReference type="GO" id="GO:0005524">
    <property type="term" value="F:ATP binding"/>
    <property type="evidence" value="ECO:0007669"/>
    <property type="project" value="UniProtKB-KW"/>
</dbReference>
<dbReference type="GO" id="GO:0106310">
    <property type="term" value="F:protein serine kinase activity"/>
    <property type="evidence" value="ECO:0007669"/>
    <property type="project" value="RHEA"/>
</dbReference>
<dbReference type="GO" id="GO:0004674">
    <property type="term" value="F:protein serine/threonine kinase activity"/>
    <property type="evidence" value="ECO:0007669"/>
    <property type="project" value="UniProtKB-KW"/>
</dbReference>
<dbReference type="CDD" id="cd14066">
    <property type="entry name" value="STKc_IRAK"/>
    <property type="match status" value="1"/>
</dbReference>
<dbReference type="FunFam" id="3.30.200.20:FF:000217">
    <property type="entry name" value="probable LRR receptor-like serine/threonine-protein kinase At1g53430"/>
    <property type="match status" value="1"/>
</dbReference>
<dbReference type="FunFam" id="3.80.10.10:FF:000838">
    <property type="entry name" value="Probable LRR receptor-like serine/threonine-protein kinase At1g53440"/>
    <property type="match status" value="1"/>
</dbReference>
<dbReference type="FunFam" id="3.80.10.10:FF:000916">
    <property type="entry name" value="Probable LRR receptor-like serine/threonine-protein kinase At1g53440"/>
    <property type="match status" value="1"/>
</dbReference>
<dbReference type="FunFam" id="2.60.120.430:FF:000004">
    <property type="entry name" value="Putative leucine-rich repeat receptor-like serine/threonine-protein kinase"/>
    <property type="match status" value="1"/>
</dbReference>
<dbReference type="FunFam" id="1.10.510.10:FF:000044">
    <property type="entry name" value="Putative LRR receptor-like serine/threonine-protein kinase"/>
    <property type="match status" value="1"/>
</dbReference>
<dbReference type="FunFam" id="3.80.10.10:FF:000433">
    <property type="entry name" value="Putative LRR receptor-like serine/threonine-protein kinase isoform A"/>
    <property type="match status" value="1"/>
</dbReference>
<dbReference type="Gene3D" id="2.60.120.430">
    <property type="entry name" value="Galactose-binding lectin"/>
    <property type="match status" value="1"/>
</dbReference>
<dbReference type="Gene3D" id="3.30.200.20">
    <property type="entry name" value="Phosphorylase Kinase, domain 1"/>
    <property type="match status" value="1"/>
</dbReference>
<dbReference type="Gene3D" id="3.80.10.10">
    <property type="entry name" value="Ribonuclease Inhibitor"/>
    <property type="match status" value="3"/>
</dbReference>
<dbReference type="Gene3D" id="1.10.510.10">
    <property type="entry name" value="Transferase(Phosphotransferase) domain 1"/>
    <property type="match status" value="1"/>
</dbReference>
<dbReference type="InterPro" id="IPR011009">
    <property type="entry name" value="Kinase-like_dom_sf"/>
</dbReference>
<dbReference type="InterPro" id="IPR001611">
    <property type="entry name" value="Leu-rich_rpt"/>
</dbReference>
<dbReference type="InterPro" id="IPR003591">
    <property type="entry name" value="Leu-rich_rpt_typical-subtyp"/>
</dbReference>
<dbReference type="InterPro" id="IPR032675">
    <property type="entry name" value="LRR_dom_sf"/>
</dbReference>
<dbReference type="InterPro" id="IPR051824">
    <property type="entry name" value="LRR_Rcpt-Like_S/T_Kinase"/>
</dbReference>
<dbReference type="InterPro" id="IPR021720">
    <property type="entry name" value="Malectin_dom"/>
</dbReference>
<dbReference type="InterPro" id="IPR000719">
    <property type="entry name" value="Prot_kinase_dom"/>
</dbReference>
<dbReference type="InterPro" id="IPR001245">
    <property type="entry name" value="Ser-Thr/Tyr_kinase_cat_dom"/>
</dbReference>
<dbReference type="InterPro" id="IPR008271">
    <property type="entry name" value="Ser/Thr_kinase_AS"/>
</dbReference>
<dbReference type="PANTHER" id="PTHR48006">
    <property type="entry name" value="LEUCINE-RICH REPEAT-CONTAINING PROTEIN DDB_G0281931-RELATED"/>
    <property type="match status" value="1"/>
</dbReference>
<dbReference type="PANTHER" id="PTHR48006:SF60">
    <property type="entry name" value="PROTEIN KINASE DOMAIN-CONTAINING PROTEIN"/>
    <property type="match status" value="1"/>
</dbReference>
<dbReference type="Pfam" id="PF00560">
    <property type="entry name" value="LRR_1"/>
    <property type="match status" value="4"/>
</dbReference>
<dbReference type="Pfam" id="PF13855">
    <property type="entry name" value="LRR_8"/>
    <property type="match status" value="1"/>
</dbReference>
<dbReference type="Pfam" id="PF11721">
    <property type="entry name" value="Malectin"/>
    <property type="match status" value="1"/>
</dbReference>
<dbReference type="Pfam" id="PF07714">
    <property type="entry name" value="PK_Tyr_Ser-Thr"/>
    <property type="match status" value="1"/>
</dbReference>
<dbReference type="SMART" id="SM00369">
    <property type="entry name" value="LRR_TYP"/>
    <property type="match status" value="3"/>
</dbReference>
<dbReference type="SMART" id="SM00220">
    <property type="entry name" value="S_TKc"/>
    <property type="match status" value="1"/>
</dbReference>
<dbReference type="SUPFAM" id="SSF52058">
    <property type="entry name" value="L domain-like"/>
    <property type="match status" value="1"/>
</dbReference>
<dbReference type="SUPFAM" id="SSF56112">
    <property type="entry name" value="Protein kinase-like (PK-like)"/>
    <property type="match status" value="1"/>
</dbReference>
<dbReference type="PROSITE" id="PS50011">
    <property type="entry name" value="PROTEIN_KINASE_DOM"/>
    <property type="match status" value="1"/>
</dbReference>
<dbReference type="PROSITE" id="PS00108">
    <property type="entry name" value="PROTEIN_KINASE_ST"/>
    <property type="match status" value="1"/>
</dbReference>
<name>Y5343_ARATH</name>
<feature type="signal peptide" evidence="2">
    <location>
        <begin position="1"/>
        <end position="28"/>
    </location>
</feature>
<feature type="chain" id="PRO_0000387534" description="Probable LRR receptor-like serine/threonine-protein kinase At1g53430">
    <location>
        <begin position="29"/>
        <end position="1038"/>
    </location>
</feature>
<feature type="topological domain" description="Extracellular" evidence="2">
    <location>
        <begin position="29"/>
        <end position="609"/>
    </location>
</feature>
<feature type="transmembrane region" description="Helical" evidence="2">
    <location>
        <begin position="610"/>
        <end position="630"/>
    </location>
</feature>
<feature type="topological domain" description="Cytoplasmic" evidence="2">
    <location>
        <begin position="631"/>
        <end position="1038"/>
    </location>
</feature>
<feature type="repeat" description="LRR 1">
    <location>
        <begin position="113"/>
        <end position="137"/>
    </location>
</feature>
<feature type="repeat" description="LRR 2">
    <location>
        <begin position="139"/>
        <end position="160"/>
    </location>
</feature>
<feature type="repeat" description="LRR 3">
    <location>
        <begin position="161"/>
        <end position="184"/>
    </location>
</feature>
<feature type="repeat" description="LRR 4">
    <location>
        <begin position="185"/>
        <end position="208"/>
    </location>
</feature>
<feature type="repeat" description="LRR 5">
    <location>
        <begin position="210"/>
        <end position="234"/>
    </location>
</feature>
<feature type="repeat" description="LRR 6">
    <location>
        <begin position="236"/>
        <end position="256"/>
    </location>
</feature>
<feature type="repeat" description="LRR 7">
    <location>
        <begin position="259"/>
        <end position="281"/>
    </location>
</feature>
<feature type="repeat" description="LRR 8">
    <location>
        <begin position="282"/>
        <end position="305"/>
    </location>
</feature>
<feature type="repeat" description="LRR 9">
    <location>
        <begin position="306"/>
        <end position="328"/>
    </location>
</feature>
<feature type="repeat" description="LRR 10">
    <location>
        <begin position="330"/>
        <end position="351"/>
    </location>
</feature>
<feature type="repeat" description="LRR 11">
    <location>
        <begin position="352"/>
        <end position="374"/>
    </location>
</feature>
<feature type="domain" description="Protein kinase" evidence="3">
    <location>
        <begin position="669"/>
        <end position="950"/>
    </location>
</feature>
<feature type="region of interest" description="Disordered" evidence="5">
    <location>
        <begin position="984"/>
        <end position="1038"/>
    </location>
</feature>
<feature type="compositionally biased region" description="Basic and acidic residues" evidence="5">
    <location>
        <begin position="1027"/>
        <end position="1038"/>
    </location>
</feature>
<feature type="active site" description="Proton acceptor" evidence="3 4">
    <location>
        <position position="795"/>
    </location>
</feature>
<feature type="binding site" evidence="3">
    <location>
        <begin position="675"/>
        <end position="683"/>
    </location>
    <ligand>
        <name>ATP</name>
        <dbReference type="ChEBI" id="CHEBI:30616"/>
    </ligand>
</feature>
<feature type="binding site" evidence="3">
    <location>
        <position position="697"/>
    </location>
    <ligand>
        <name>ATP</name>
        <dbReference type="ChEBI" id="CHEBI:30616"/>
    </ligand>
</feature>
<feature type="modified residue" description="Phosphothreonine" evidence="1">
    <location>
        <position position="658"/>
    </location>
</feature>
<feature type="modified residue" description="Phosphotyrosine" evidence="1">
    <location>
        <position position="742"/>
    </location>
</feature>
<feature type="modified residue" description="Phosphoserine" evidence="1">
    <location>
        <position position="828"/>
    </location>
</feature>
<feature type="modified residue" description="Phosphothreonine" evidence="1">
    <location>
        <position position="829"/>
    </location>
</feature>
<feature type="modified residue" description="Phosphothreonine" evidence="1">
    <location>
        <position position="834"/>
    </location>
</feature>
<feature type="modified residue" description="Phosphotyrosine" evidence="1">
    <location>
        <position position="842"/>
    </location>
</feature>
<feature type="glycosylation site" description="N-linked (GlcNAc...) asparagine" evidence="2">
    <location>
        <position position="48"/>
    </location>
</feature>
<feature type="glycosylation site" description="N-linked (GlcNAc...) asparagine" evidence="2">
    <location>
        <position position="77"/>
    </location>
</feature>
<feature type="glycosylation site" description="N-linked (GlcNAc...) asparagine" evidence="2">
    <location>
        <position position="85"/>
    </location>
</feature>
<feature type="glycosylation site" description="N-linked (GlcNAc...) asparagine" evidence="2">
    <location>
        <position position="112"/>
    </location>
</feature>
<feature type="glycosylation site" description="N-linked (GlcNAc...) asparagine" evidence="2">
    <location>
        <position position="127"/>
    </location>
</feature>
<feature type="glycosylation site" description="N-linked (GlcNAc...) asparagine" evidence="2">
    <location>
        <position position="196"/>
    </location>
</feature>
<feature type="glycosylation site" description="N-linked (GlcNAc...) asparagine" evidence="2">
    <location>
        <position position="210"/>
    </location>
</feature>
<feature type="glycosylation site" description="N-linked (GlcNAc...) asparagine" evidence="2">
    <location>
        <position position="231"/>
    </location>
</feature>
<feature type="glycosylation site" description="N-linked (GlcNAc...) asparagine" evidence="2">
    <location>
        <position position="255"/>
    </location>
</feature>
<feature type="glycosylation site" description="N-linked (GlcNAc...) asparagine" evidence="2">
    <location>
        <position position="258"/>
    </location>
</feature>
<feature type="glycosylation site" description="N-linked (GlcNAc...) asparagine" evidence="2">
    <location>
        <position position="339"/>
    </location>
</feature>
<feature type="glycosylation site" description="N-linked (GlcNAc...) asparagine" evidence="2">
    <location>
        <position position="363"/>
    </location>
</feature>
<feature type="glycosylation site" description="N-linked (GlcNAc...) asparagine" evidence="2">
    <location>
        <position position="471"/>
    </location>
</feature>
<feature type="glycosylation site" description="N-linked (GlcNAc...) asparagine" evidence="2">
    <location>
        <position position="561"/>
    </location>
</feature>
<feature type="splice variant" id="VSP_038281" description="In isoform 2." evidence="6">
    <location>
        <begin position="1"/>
        <end position="33"/>
    </location>
</feature>
<feature type="splice variant" id="VSP_038282" description="In isoform 2." evidence="6">
    <original>DEV</original>
    <variation>MAI</variation>
    <location>
        <begin position="34"/>
        <end position="36"/>
    </location>
</feature>
<sequence>MGFIFSTEKVVYVLLLIFVCLENFGSNAQLLPEDEVQTLRTIFRKLQNQTVNIERTSCSDQNWNFVVESASNSPTSNITCDCTFNASSVCRVTNIQLKSFSLPGIFPPEFGNLTRLREIDLSRNFLNGTIPTTLSQIPLEILSVIGNRLSGPFPPQLGDITTLTDVNLETNLFTGPLPRNLGNLRSLKELLLSANNFTGQIPESLSNLKNLTEFRIDGNSLSGKIPDFIGNWTLLERLDLQGTSMEGPIPPSISNLTNLTELRITDLRGQAAFSFPDLRNLMKMKRLVLRNCLIRGPIPEYIGSMSELKTLDLSSNMLTGVIPDTFRNLDAFNFMFLNNNSLTGPVPQFIINSKENLDLSDNNFTQPPTLSCNQLDVNLISSYPSVTDNSVQWCLREGLPCPEDAKQSSLFINCGGSRLKIGKDTYTDDLNSRGQSTFSSVSERWGYSSSGVWLGKEDAGYLATDRFNLINGSTPEYYKTARLSPQSLKYYGLCLRRGSYKLQLHFAEIMFSNDQTFNSLGRRIFDIYVQGNLLERDFNIAERAGGVGKPFIRQIDGVQVNGSTLEIHLQWTGKGTNVIPTRGVYGPLISAITITPNFKVDTGKPLSNGAVAGIVIAACAVFGLLVLVILRLTGYLGGKEVDENEELRGLDLQTGSFTLKQIKRATNNFDPENKIGEGGFGPVYKGVLADGMTIAVKQLSSKSKQGNREFVTEIGMISALQHPNLVKLYGCCIEGKELLLVYEYLENNSLARALFGTEKQRLHLDWSTRNKICIGIAKGLAYLHEESRLKIVHRDIKATNVLLDLSLNAKISDFGLAKLNDDENTHISTRIAGTIGYMAPEYAMRGYLTDKADVYSFGVVCLEIVSGKSNTNYRPKEEFVYLLDWAYVLQEQGSLLELVDPDLGTSFSKKEAMRMLNIALLCTNPSPTLRPPMSSVVSMLEGKIKVQPPLVKREADPSGSAAMRFKALELLSQDSESQVSTYARNREQDISSSSMDGPWVDSSFSEPGKDVSLQQQEEGRSSSSSRKLLDDLTDVKIE</sequence>